<organism>
    <name type="scientific">Triticum aestivum</name>
    <name type="common">Wheat</name>
    <dbReference type="NCBI Taxonomy" id="4565"/>
    <lineage>
        <taxon>Eukaryota</taxon>
        <taxon>Viridiplantae</taxon>
        <taxon>Streptophyta</taxon>
        <taxon>Embryophyta</taxon>
        <taxon>Tracheophyta</taxon>
        <taxon>Spermatophyta</taxon>
        <taxon>Magnoliopsida</taxon>
        <taxon>Liliopsida</taxon>
        <taxon>Poales</taxon>
        <taxon>Poaceae</taxon>
        <taxon>BOP clade</taxon>
        <taxon>Pooideae</taxon>
        <taxon>Triticodae</taxon>
        <taxon>Triticeae</taxon>
        <taxon>Triticinae</taxon>
        <taxon>Triticum</taxon>
    </lineage>
</organism>
<feature type="chain" id="PRO_0000102593" description="Glutenin, high molecular weight subunit PC237">
    <location>
        <begin position="1" status="less than"/>
        <end position="39"/>
    </location>
</feature>
<feature type="non-terminal residue">
    <location>
        <position position="1"/>
    </location>
</feature>
<evidence type="ECO:0000305" key="1"/>
<comment type="function">
    <text>Glutenins are high-molecular weight seed storage proteins of wheat endosperm. Thought to be responsible for the visco-elastic property of wheat dough.</text>
</comment>
<comment type="subunit">
    <text>Disulfide-bridge linked aggregates.</text>
</comment>
<comment type="miscellaneous">
    <text>Glutenins are coded by several genes on each of the group 1 chromosomes of wheat.</text>
</comment>
<comment type="similarity">
    <text evidence="1">Belongs to the gliadin/glutenin family.</text>
</comment>
<keyword id="KW-1015">Disulfide bond</keyword>
<keyword id="KW-1185">Reference proteome</keyword>
<keyword id="KW-0677">Repeat</keyword>
<keyword id="KW-0708">Seed storage protein</keyword>
<keyword id="KW-0758">Storage protein</keyword>
<sequence>LVSVEHQAARLKVAKAQQLAAQLPAMCRLEGGDALSASQ</sequence>
<proteinExistence type="evidence at transcript level"/>
<dbReference type="EMBL" id="X00055">
    <property type="protein sequence ID" value="CAA24934.1"/>
    <property type="molecule type" value="mRNA"/>
</dbReference>
<dbReference type="PIR" id="A03353">
    <property type="entry name" value="A03353"/>
</dbReference>
<dbReference type="Proteomes" id="UP000019116">
    <property type="component" value="Unplaced"/>
</dbReference>
<dbReference type="GO" id="GO:0045735">
    <property type="term" value="F:nutrient reservoir activity"/>
    <property type="evidence" value="ECO:0007669"/>
    <property type="project" value="UniProtKB-KW"/>
</dbReference>
<dbReference type="InterPro" id="IPR001419">
    <property type="entry name" value="Glutenin"/>
</dbReference>
<dbReference type="Pfam" id="PF03157">
    <property type="entry name" value="Glutenin_hmw"/>
    <property type="match status" value="1"/>
</dbReference>
<reference key="1">
    <citation type="journal article" date="1983" name="FEBS Lett.">
        <title>Identification of barley and wheat cDNA clones related to the high-M-r polypeptides of wheat gluten.</title>
        <authorList>
            <person name="Forde J."/>
            <person name="Forde B.G."/>
            <person name="Fry R.P."/>
            <person name="Kreis M."/>
            <person name="Shewry P.R."/>
            <person name="Miflin B.J."/>
        </authorList>
    </citation>
    <scope>NUCLEOTIDE SEQUENCE [MRNA]</scope>
</reference>
<name>GLT2_WHEAT</name>
<accession>P02862</accession>
<protein>
    <recommendedName>
        <fullName>Glutenin, high molecular weight subunit PC237</fullName>
    </recommendedName>
</protein>